<comment type="function">
    <text evidence="1">May play a role in DNA repair. It seems to be involved in an RecBC-independent recombinational process of DNA repair. It may act with RecF and RecO.</text>
</comment>
<comment type="similarity">
    <text evidence="1">Belongs to the RecR family.</text>
</comment>
<protein>
    <recommendedName>
        <fullName evidence="1">Recombination protein RecR</fullName>
    </recommendedName>
</protein>
<organism>
    <name type="scientific">Stutzerimonas stutzeri (strain A1501)</name>
    <name type="common">Pseudomonas stutzeri</name>
    <dbReference type="NCBI Taxonomy" id="379731"/>
    <lineage>
        <taxon>Bacteria</taxon>
        <taxon>Pseudomonadati</taxon>
        <taxon>Pseudomonadota</taxon>
        <taxon>Gammaproteobacteria</taxon>
        <taxon>Pseudomonadales</taxon>
        <taxon>Pseudomonadaceae</taxon>
        <taxon>Stutzerimonas</taxon>
    </lineage>
</organism>
<keyword id="KW-0227">DNA damage</keyword>
<keyword id="KW-0233">DNA recombination</keyword>
<keyword id="KW-0234">DNA repair</keyword>
<keyword id="KW-0479">Metal-binding</keyword>
<keyword id="KW-1185">Reference proteome</keyword>
<keyword id="KW-0862">Zinc</keyword>
<keyword id="KW-0863">Zinc-finger</keyword>
<accession>A4VKJ5</accession>
<gene>
    <name evidence="1" type="primary">recR</name>
    <name type="ordered locus">PST_1822</name>
</gene>
<reference key="1">
    <citation type="journal article" date="2008" name="Proc. Natl. Acad. Sci. U.S.A.">
        <title>Nitrogen fixation island and rhizosphere competence traits in the genome of root-associated Pseudomonas stutzeri A1501.</title>
        <authorList>
            <person name="Yan Y."/>
            <person name="Yang J."/>
            <person name="Dou Y."/>
            <person name="Chen M."/>
            <person name="Ping S."/>
            <person name="Peng J."/>
            <person name="Lu W."/>
            <person name="Zhang W."/>
            <person name="Yao Z."/>
            <person name="Li H."/>
            <person name="Liu W."/>
            <person name="He S."/>
            <person name="Geng L."/>
            <person name="Zhang X."/>
            <person name="Yang F."/>
            <person name="Yu H."/>
            <person name="Zhan Y."/>
            <person name="Li D."/>
            <person name="Lin Z."/>
            <person name="Wang Y."/>
            <person name="Elmerich C."/>
            <person name="Lin M."/>
            <person name="Jin Q."/>
        </authorList>
    </citation>
    <scope>NUCLEOTIDE SEQUENCE [LARGE SCALE GENOMIC DNA]</scope>
    <source>
        <strain>A1501</strain>
    </source>
</reference>
<evidence type="ECO:0000255" key="1">
    <source>
        <dbReference type="HAMAP-Rule" id="MF_00017"/>
    </source>
</evidence>
<feature type="chain" id="PRO_1000001590" description="Recombination protein RecR">
    <location>
        <begin position="1"/>
        <end position="199"/>
    </location>
</feature>
<feature type="domain" description="Toprim" evidence="1">
    <location>
        <begin position="80"/>
        <end position="174"/>
    </location>
</feature>
<feature type="zinc finger region" description="C4-type" evidence="1">
    <location>
        <begin position="57"/>
        <end position="72"/>
    </location>
</feature>
<proteinExistence type="inferred from homology"/>
<name>RECR_STUS1</name>
<dbReference type="EMBL" id="CP000304">
    <property type="protein sequence ID" value="ABP79496.1"/>
    <property type="molecule type" value="Genomic_DNA"/>
</dbReference>
<dbReference type="RefSeq" id="WP_011912973.1">
    <property type="nucleotide sequence ID" value="NC_009434.1"/>
</dbReference>
<dbReference type="SMR" id="A4VKJ5"/>
<dbReference type="GeneID" id="66821713"/>
<dbReference type="KEGG" id="psa:PST_1822"/>
<dbReference type="eggNOG" id="COG0353">
    <property type="taxonomic scope" value="Bacteria"/>
</dbReference>
<dbReference type="HOGENOM" id="CLU_060739_1_2_6"/>
<dbReference type="Proteomes" id="UP000000233">
    <property type="component" value="Chromosome"/>
</dbReference>
<dbReference type="GO" id="GO:0003677">
    <property type="term" value="F:DNA binding"/>
    <property type="evidence" value="ECO:0007669"/>
    <property type="project" value="UniProtKB-UniRule"/>
</dbReference>
<dbReference type="GO" id="GO:0008270">
    <property type="term" value="F:zinc ion binding"/>
    <property type="evidence" value="ECO:0007669"/>
    <property type="project" value="UniProtKB-KW"/>
</dbReference>
<dbReference type="GO" id="GO:0006310">
    <property type="term" value="P:DNA recombination"/>
    <property type="evidence" value="ECO:0007669"/>
    <property type="project" value="UniProtKB-UniRule"/>
</dbReference>
<dbReference type="GO" id="GO:0006281">
    <property type="term" value="P:DNA repair"/>
    <property type="evidence" value="ECO:0007669"/>
    <property type="project" value="UniProtKB-UniRule"/>
</dbReference>
<dbReference type="CDD" id="cd01025">
    <property type="entry name" value="TOPRIM_recR"/>
    <property type="match status" value="1"/>
</dbReference>
<dbReference type="Gene3D" id="3.40.1360.10">
    <property type="match status" value="1"/>
</dbReference>
<dbReference type="Gene3D" id="6.10.250.240">
    <property type="match status" value="1"/>
</dbReference>
<dbReference type="Gene3D" id="1.10.8.420">
    <property type="entry name" value="RecR Domain 1"/>
    <property type="match status" value="1"/>
</dbReference>
<dbReference type="HAMAP" id="MF_00017">
    <property type="entry name" value="RecR"/>
    <property type="match status" value="1"/>
</dbReference>
<dbReference type="InterPro" id="IPR000093">
    <property type="entry name" value="DNA_Rcmb_RecR"/>
</dbReference>
<dbReference type="InterPro" id="IPR023627">
    <property type="entry name" value="Rcmb_RecR"/>
</dbReference>
<dbReference type="InterPro" id="IPR015967">
    <property type="entry name" value="Rcmb_RecR_Znf"/>
</dbReference>
<dbReference type="InterPro" id="IPR006171">
    <property type="entry name" value="TOPRIM_dom"/>
</dbReference>
<dbReference type="InterPro" id="IPR034137">
    <property type="entry name" value="TOPRIM_RecR"/>
</dbReference>
<dbReference type="NCBIfam" id="TIGR00615">
    <property type="entry name" value="recR"/>
    <property type="match status" value="1"/>
</dbReference>
<dbReference type="PANTHER" id="PTHR30446">
    <property type="entry name" value="RECOMBINATION PROTEIN RECR"/>
    <property type="match status" value="1"/>
</dbReference>
<dbReference type="PANTHER" id="PTHR30446:SF0">
    <property type="entry name" value="RECOMBINATION PROTEIN RECR"/>
    <property type="match status" value="1"/>
</dbReference>
<dbReference type="Pfam" id="PF21175">
    <property type="entry name" value="RecR_C"/>
    <property type="match status" value="1"/>
</dbReference>
<dbReference type="Pfam" id="PF21176">
    <property type="entry name" value="RecR_HhH"/>
    <property type="match status" value="1"/>
</dbReference>
<dbReference type="Pfam" id="PF02132">
    <property type="entry name" value="RecR_ZnF"/>
    <property type="match status" value="1"/>
</dbReference>
<dbReference type="Pfam" id="PF13662">
    <property type="entry name" value="Toprim_4"/>
    <property type="match status" value="1"/>
</dbReference>
<dbReference type="SMART" id="SM00493">
    <property type="entry name" value="TOPRIM"/>
    <property type="match status" value="1"/>
</dbReference>
<dbReference type="SUPFAM" id="SSF111304">
    <property type="entry name" value="Recombination protein RecR"/>
    <property type="match status" value="1"/>
</dbReference>
<dbReference type="PROSITE" id="PS01300">
    <property type="entry name" value="RECR"/>
    <property type="match status" value="1"/>
</dbReference>
<dbReference type="PROSITE" id="PS50880">
    <property type="entry name" value="TOPRIM"/>
    <property type="match status" value="1"/>
</dbReference>
<sequence>MSFSPLIRQLIDALRILPGVGQKTAQRMALQLLERDRSGGLRLAQALTRAMEGVGYCRQCRTLTEDELCPQCADPRRDDSLLCVVQSPVDVFAVEQTGFRGRYFVLKGHLSPLDGLGPEAIGIPELLGRVADGAFSEVILATNPTVEGEATAHYIAQMLIPKGLTISRIAHGVPLGGELDLVDGGTLAHALAGRKPISL</sequence>